<accession>Q9N0Z4</accession>
<accession>Q8WMR2</accession>
<organism>
    <name type="scientific">Oryctolagus cuniculus</name>
    <name type="common">Rabbit</name>
    <dbReference type="NCBI Taxonomy" id="9986"/>
    <lineage>
        <taxon>Eukaryota</taxon>
        <taxon>Metazoa</taxon>
        <taxon>Chordata</taxon>
        <taxon>Craniata</taxon>
        <taxon>Vertebrata</taxon>
        <taxon>Euteleostomi</taxon>
        <taxon>Mammalia</taxon>
        <taxon>Eutheria</taxon>
        <taxon>Euarchontoglires</taxon>
        <taxon>Glires</taxon>
        <taxon>Lagomorpha</taxon>
        <taxon>Leporidae</taxon>
        <taxon>Oryctolagus</taxon>
    </lineage>
</organism>
<gene>
    <name type="primary">ATP11B</name>
</gene>
<proteinExistence type="evidence at protein level"/>
<comment type="function">
    <text evidence="4">Catalytic component of a P4-ATPase flippase complex which catalyzes the hydrolysis of ATP coupled to the transport of aminophospholipids, phosphatidylserines (PS) and phosphatidylethanolamines (PE), from the outer to the inner leaflet of intracellular membranes. May contribute to the maintenance of membrane lipid asymmetry in endosome compartment.</text>
</comment>
<comment type="function">
    <molecule>Isoform 2</molecule>
    <text evidence="7 8">Appears to play a role in the subnuclear trafficking of transcription factors with RING motifs.</text>
</comment>
<comment type="catalytic activity">
    <reaction evidence="4">
        <text>ATP + H2O + phospholipidSide 1 = ADP + phosphate + phospholipidSide 2.</text>
        <dbReference type="EC" id="7.6.2.1"/>
    </reaction>
</comment>
<comment type="catalytic activity">
    <reaction evidence="4">
        <text>a 1,2-diacyl-sn-glycero-3-phospho-L-serine(out) + ATP + H2O = a 1,2-diacyl-sn-glycero-3-phospho-L-serine(in) + ADP + phosphate + H(+)</text>
        <dbReference type="Rhea" id="RHEA:38567"/>
        <dbReference type="ChEBI" id="CHEBI:15377"/>
        <dbReference type="ChEBI" id="CHEBI:15378"/>
        <dbReference type="ChEBI" id="CHEBI:30616"/>
        <dbReference type="ChEBI" id="CHEBI:43474"/>
        <dbReference type="ChEBI" id="CHEBI:57262"/>
        <dbReference type="ChEBI" id="CHEBI:456216"/>
    </reaction>
    <physiologicalReaction direction="left-to-right" evidence="4">
        <dbReference type="Rhea" id="RHEA:38568"/>
    </physiologicalReaction>
</comment>
<comment type="catalytic activity">
    <reaction evidence="4">
        <text>a 1,2-diacyl-sn-glycero-3-phosphoethanolamine(out) + ATP + H2O = a 1,2-diacyl-sn-glycero-3-phosphoethanolamine(in) + ADP + phosphate + H(+)</text>
        <dbReference type="Rhea" id="RHEA:66132"/>
        <dbReference type="ChEBI" id="CHEBI:15377"/>
        <dbReference type="ChEBI" id="CHEBI:15378"/>
        <dbReference type="ChEBI" id="CHEBI:30616"/>
        <dbReference type="ChEBI" id="CHEBI:43474"/>
        <dbReference type="ChEBI" id="CHEBI:64612"/>
        <dbReference type="ChEBI" id="CHEBI:456216"/>
    </reaction>
    <physiologicalReaction direction="left-to-right" evidence="4">
        <dbReference type="Rhea" id="RHEA:66133"/>
    </physiologicalReaction>
</comment>
<comment type="cofactor">
    <cofactor evidence="5">
        <name>Mg(2+)</name>
        <dbReference type="ChEBI" id="CHEBI:18420"/>
    </cofactor>
</comment>
<comment type="subunit">
    <text evidence="4">Component of a P4-ATPase flippase complex which consists of a catalytic alpha subunit ATP11B and an accessory beta subunit TMEM30A.</text>
</comment>
<comment type="subunit">
    <molecule>Isoform 2</molecule>
    <text evidence="7 8">Interacts with HLTF (via the RING-finger).</text>
</comment>
<comment type="subcellular location">
    <subcellularLocation>
        <location evidence="4">Recycling endosome membrane</location>
        <topology evidence="6">Multi-pass membrane protein</topology>
    </subcellularLocation>
    <subcellularLocation>
        <location evidence="4">Early endosome</location>
    </subcellularLocation>
    <subcellularLocation>
        <location evidence="4">Endoplasmic reticulum</location>
    </subcellularLocation>
    <subcellularLocation>
        <location evidence="4">Golgi apparatus</location>
        <location evidence="4">trans-Golgi network</location>
    </subcellularLocation>
    <text evidence="4">Exit from the endoplasmic reticulum requires the presence of TMEM30A, but not TMEM30B. In the presence of TMEM30A, mainly located in recycling endosomes.</text>
</comment>
<comment type="subcellular location">
    <molecule>Isoform 2</molecule>
    <subcellularLocation>
        <location evidence="7">Nucleus inner membrane</location>
        <topology evidence="6">Multi-pass membrane protein</topology>
    </subcellularLocation>
</comment>
<comment type="alternative products">
    <event type="alternative splicing"/>
    <isoform>
        <id>Q9N0Z4-1</id>
        <name>1</name>
        <sequence type="displayed"/>
    </isoform>
    <isoform>
        <id>Q9N0Z4-2</id>
        <name>2</name>
        <name>RFBP</name>
        <sequence type="described" ref="VSP_007308"/>
    </isoform>
</comment>
<comment type="tissue specificity">
    <molecule>Isoform 2</molecule>
    <text evidence="7">Ubiquitously expressed.</text>
</comment>
<comment type="induction">
    <molecule>Isoform 2</molecule>
    <text evidence="7">Up-regulated in endometrium upon stimulation with hormones, progesterone and prolactin.</text>
</comment>
<comment type="miscellaneous">
    <molecule>Isoform 2</molecule>
    <text evidence="10">Is missing the sequence which constitutes transmembrane helix 4 and thus has an altered transmembrane architecture compared to isoform 1. The long domain (amino acids 352-868), which is normally cytoplasmic, extends into the nucleoplasm. This isoform is unique to rabbit.</text>
</comment>
<comment type="similarity">
    <text evidence="10">Belongs to the cation transport ATPase (P-type) (TC 3.A.3) family. Type IV subfamily.</text>
</comment>
<reference key="1">
    <citation type="journal article" date="2001" name="J. Biol. Chem.">
        <title>Cloning and characterization of an atypical type IV P-type ATPase that binds to the RING motif of RUSH transcription factors.</title>
        <authorList>
            <person name="Mansharamani M."/>
            <person name="Hewetson A."/>
            <person name="Chilton B.S."/>
        </authorList>
    </citation>
    <scope>NUCLEOTIDE SEQUENCE [MRNA] (ISOFORM 2)</scope>
    <scope>FUNCTION (ISOFORM 2)</scope>
    <scope>SUBCELLULAR LOCATION (ISOFORM 2)</scope>
    <scope>INTERACTION WITH HLTF (ISOFORM 2)</scope>
    <scope>TISSUE SPECIFICITY (ISOFORM 2)</scope>
    <scope>INDUCTION BY HORMONES (ISOFORM 2)</scope>
    <source>
        <tissue>Endometrium</tissue>
    </source>
</reference>
<reference key="2">
    <citation type="journal article" date="2002" name="J. Biol. Chem.">
        <title>Reanalysis of ATP11B, a Type IV P-type ATPase.</title>
        <authorList>
            <person name="Halleck M.S."/>
            <person name="Schlegel R.A."/>
            <person name="Williamson P.L."/>
        </authorList>
    </citation>
    <scope>NUCLEOTIDE SEQUENCE [MRNA] OF 97-437 (ISOFORM 1)</scope>
    <source>
        <strain>New Zealand white</strain>
        <tissue>Leukocyte</tissue>
    </source>
</reference>
<reference key="3">
    <citation type="journal article" date="2008" name="Mol. Cell. Endocrinol.">
        <title>Conservation of inter-protein binding sites in RUSH and RFBP, an ATP11B isoform.</title>
        <authorList>
            <person name="Hewetson A."/>
            <person name="Wright-Pastusek A.E."/>
            <person name="Helmer R.A."/>
            <person name="Wesley K.A."/>
            <person name="Chilton B.S."/>
        </authorList>
    </citation>
    <scope>FUNCTION (ISOFORM 2)</scope>
    <scope>INTERACTION WITH HLTF (ISOFORM 2)</scope>
    <scope>MUTAGENESIS OF ILE-799</scope>
</reference>
<protein>
    <recommendedName>
        <fullName>Phospholipid-transporting ATPase IF</fullName>
        <ecNumber evidence="4">7.6.2.1</ecNumber>
    </recommendedName>
    <alternativeName>
        <fullName>ATPase IR</fullName>
    </alternativeName>
    <alternativeName>
        <fullName>ATPase class VI type 11B</fullName>
    </alternativeName>
    <alternativeName>
        <fullName>P4-ATPase flippase complex alpha subunit ATP11B</fullName>
    </alternativeName>
    <alternativeName>
        <fullName>RING finger-binding protein</fullName>
    </alternativeName>
</protein>
<feature type="chain" id="PRO_0000046372" description="Phospholipid-transporting ATPase IF">
    <location>
        <begin position="1" status="less than"/>
        <end position="1169"/>
    </location>
</feature>
<feature type="topological domain" description="Cytoplasmic" evidence="6">
    <location>
        <begin position="1" status="less than"/>
        <end position="47"/>
    </location>
</feature>
<feature type="transmembrane region" description="Helical" evidence="6">
    <location>
        <begin position="48"/>
        <end position="69"/>
    </location>
</feature>
<feature type="topological domain" description="Extracellular" evidence="6">
    <location>
        <begin position="70"/>
        <end position="74"/>
    </location>
</feature>
<feature type="transmembrane region" description="Helical" evidence="6">
    <location>
        <begin position="75"/>
        <end position="96"/>
    </location>
</feature>
<feature type="topological domain" description="Cytoplasmic" evidence="6">
    <location>
        <begin position="97"/>
        <end position="281"/>
    </location>
</feature>
<feature type="transmembrane region" description="Helical" evidence="6">
    <location>
        <begin position="282"/>
        <end position="303"/>
    </location>
</feature>
<feature type="topological domain" description="Extracellular" evidence="6">
    <location>
        <begin position="304"/>
        <end position="333"/>
    </location>
</feature>
<feature type="transmembrane region" description="Helical" evidence="6">
    <location>
        <begin position="334"/>
        <end position="351"/>
    </location>
</feature>
<feature type="topological domain" description="Cytoplasmic" evidence="6">
    <location>
        <begin position="352"/>
        <end position="868"/>
    </location>
</feature>
<feature type="transmembrane region" description="Helical" evidence="6">
    <location>
        <begin position="869"/>
        <end position="890"/>
    </location>
</feature>
<feature type="topological domain" description="Extracellular" evidence="6">
    <location>
        <begin position="891"/>
        <end position="902"/>
    </location>
</feature>
<feature type="transmembrane region" description="Helical" evidence="6">
    <location>
        <begin position="903"/>
        <end position="922"/>
    </location>
</feature>
<feature type="topological domain" description="Cytoplasmic" evidence="6">
    <location>
        <begin position="923"/>
        <end position="952"/>
    </location>
</feature>
<feature type="transmembrane region" description="Helical" evidence="6">
    <location>
        <begin position="953"/>
        <end position="974"/>
    </location>
</feature>
<feature type="topological domain" description="Extracellular" evidence="6">
    <location>
        <begin position="975"/>
        <end position="989"/>
    </location>
</feature>
<feature type="transmembrane region" description="Helical" evidence="6">
    <location>
        <begin position="990"/>
        <end position="1012"/>
    </location>
</feature>
<feature type="topological domain" description="Cytoplasmic" evidence="6">
    <location>
        <begin position="1013"/>
        <end position="1017"/>
    </location>
</feature>
<feature type="transmembrane region" description="Helical" evidence="6">
    <location>
        <begin position="1018"/>
        <end position="1039"/>
    </location>
</feature>
<feature type="topological domain" description="Extracellular" evidence="6">
    <location>
        <begin position="1040"/>
        <end position="1057"/>
    </location>
</feature>
<feature type="transmembrane region" description="Helical" evidence="6">
    <location>
        <begin position="1058"/>
        <end position="1082"/>
    </location>
</feature>
<feature type="topological domain" description="Cytoplasmic" evidence="6">
    <location>
        <begin position="1083"/>
        <end position="1169"/>
    </location>
</feature>
<feature type="region of interest" description="Required for binding to the RING-finger of HLTF">
    <location>
        <begin position="794"/>
        <end position="802"/>
    </location>
</feature>
<feature type="active site" description="4-aspartylphosphate intermediate" evidence="3">
    <location>
        <position position="399"/>
    </location>
</feature>
<feature type="binding site" evidence="5">
    <location>
        <position position="399"/>
    </location>
    <ligand>
        <name>ATP</name>
        <dbReference type="ChEBI" id="CHEBI:30616"/>
    </ligand>
</feature>
<feature type="binding site" evidence="5">
    <location>
        <position position="399"/>
    </location>
    <ligand>
        <name>Mg(2+)</name>
        <dbReference type="ChEBI" id="CHEBI:18420"/>
    </ligand>
</feature>
<feature type="binding site" evidence="5">
    <location>
        <position position="400"/>
    </location>
    <ligand>
        <name>ATP</name>
        <dbReference type="ChEBI" id="CHEBI:30616"/>
    </ligand>
</feature>
<feature type="binding site" evidence="5">
    <location>
        <position position="401"/>
    </location>
    <ligand>
        <name>ATP</name>
        <dbReference type="ChEBI" id="CHEBI:30616"/>
    </ligand>
</feature>
<feature type="binding site" evidence="5">
    <location>
        <position position="401"/>
    </location>
    <ligand>
        <name>Mg(2+)</name>
        <dbReference type="ChEBI" id="CHEBI:18420"/>
    </ligand>
</feature>
<feature type="binding site" evidence="1">
    <location>
        <position position="523"/>
    </location>
    <ligand>
        <name>ATP</name>
        <dbReference type="ChEBI" id="CHEBI:30616"/>
    </ligand>
</feature>
<feature type="binding site" evidence="5">
    <location>
        <position position="564"/>
    </location>
    <ligand>
        <name>ATP</name>
        <dbReference type="ChEBI" id="CHEBI:30616"/>
    </ligand>
</feature>
<feature type="binding site" evidence="1">
    <location>
        <position position="587"/>
    </location>
    <ligand>
        <name>ATP</name>
        <dbReference type="ChEBI" id="CHEBI:30616"/>
    </ligand>
</feature>
<feature type="binding site" evidence="1">
    <location>
        <position position="618"/>
    </location>
    <ligand>
        <name>ATP</name>
        <dbReference type="ChEBI" id="CHEBI:30616"/>
    </ligand>
</feature>
<feature type="binding site" evidence="1">
    <location>
        <position position="698"/>
    </location>
    <ligand>
        <name>ATP</name>
        <dbReference type="ChEBI" id="CHEBI:30616"/>
    </ligand>
</feature>
<feature type="binding site" evidence="1">
    <location>
        <position position="699"/>
    </location>
    <ligand>
        <name>ATP</name>
        <dbReference type="ChEBI" id="CHEBI:30616"/>
    </ligand>
</feature>
<feature type="binding site" evidence="1">
    <location>
        <position position="700"/>
    </location>
    <ligand>
        <name>ATP</name>
        <dbReference type="ChEBI" id="CHEBI:30616"/>
    </ligand>
</feature>
<feature type="binding site" evidence="1">
    <location>
        <position position="786"/>
    </location>
    <ligand>
        <name>ATP</name>
        <dbReference type="ChEBI" id="CHEBI:30616"/>
    </ligand>
</feature>
<feature type="binding site" evidence="1">
    <location>
        <position position="792"/>
    </location>
    <ligand>
        <name>ATP</name>
        <dbReference type="ChEBI" id="CHEBI:30616"/>
    </ligand>
</feature>
<feature type="binding site" evidence="2">
    <location>
        <position position="813"/>
    </location>
    <ligand>
        <name>Mg(2+)</name>
        <dbReference type="ChEBI" id="CHEBI:18420"/>
    </ligand>
</feature>
<feature type="binding site" evidence="5">
    <location>
        <position position="816"/>
    </location>
    <ligand>
        <name>ATP</name>
        <dbReference type="ChEBI" id="CHEBI:30616"/>
    </ligand>
</feature>
<feature type="binding site" evidence="5">
    <location>
        <position position="817"/>
    </location>
    <ligand>
        <name>ATP</name>
        <dbReference type="ChEBI" id="CHEBI:30616"/>
    </ligand>
</feature>
<feature type="binding site" evidence="2">
    <location>
        <position position="817"/>
    </location>
    <ligand>
        <name>Mg(2+)</name>
        <dbReference type="ChEBI" id="CHEBI:18420"/>
    </ligand>
</feature>
<feature type="modified residue" description="Phosphoserine" evidence="4">
    <location>
        <position position="1146"/>
    </location>
</feature>
<feature type="splice variant" id="VSP_007308" description="In isoform 2." evidence="9">
    <location>
        <begin position="327"/>
        <end position="392"/>
    </location>
</feature>
<feature type="mutagenesis site" description="Increased binding to the RING-finger of HLTF." evidence="8">
    <original>I</original>
    <variation>D</variation>
    <location>
        <position position="799"/>
    </location>
</feature>
<feature type="sequence conflict" description="In Ref. 1; AAF68024." evidence="10" ref="1">
    <original>R</original>
    <variation>RGMHL</variation>
    <location>
        <position position="133"/>
    </location>
</feature>
<feature type="sequence conflict" description="In Ref. 1; AAF68024." evidence="10" ref="1">
    <original>I</original>
    <variation>V</variation>
    <location>
        <position position="217"/>
    </location>
</feature>
<feature type="sequence conflict" description="In Ref. 1; AAF68024." evidence="10" ref="1">
    <original>I</original>
    <variation>T</variation>
    <location>
        <position position="283"/>
    </location>
</feature>
<feature type="sequence conflict" description="In Ref. 2; AAL57758." evidence="10" ref="2">
    <original>L</original>
    <variation>S</variation>
    <location>
        <position position="299"/>
    </location>
</feature>
<feature type="non-terminal residue">
    <location>
        <position position="1"/>
    </location>
</feature>
<name>AT11B_RABIT</name>
<keyword id="KW-0025">Alternative splicing</keyword>
<keyword id="KW-0067">ATP-binding</keyword>
<keyword id="KW-0256">Endoplasmic reticulum</keyword>
<keyword id="KW-0967">Endosome</keyword>
<keyword id="KW-0333">Golgi apparatus</keyword>
<keyword id="KW-0445">Lipid transport</keyword>
<keyword id="KW-0460">Magnesium</keyword>
<keyword id="KW-0472">Membrane</keyword>
<keyword id="KW-0479">Metal-binding</keyword>
<keyword id="KW-0547">Nucleotide-binding</keyword>
<keyword id="KW-0539">Nucleus</keyword>
<keyword id="KW-0597">Phosphoprotein</keyword>
<keyword id="KW-1185">Reference proteome</keyword>
<keyword id="KW-1278">Translocase</keyword>
<keyword id="KW-0812">Transmembrane</keyword>
<keyword id="KW-1133">Transmembrane helix</keyword>
<keyword id="KW-0813">Transport</keyword>
<evidence type="ECO:0000250" key="1">
    <source>
        <dbReference type="UniProtKB" id="P04191"/>
    </source>
</evidence>
<evidence type="ECO:0000250" key="2">
    <source>
        <dbReference type="UniProtKB" id="Q8NB49"/>
    </source>
</evidence>
<evidence type="ECO:0000250" key="3">
    <source>
        <dbReference type="UniProtKB" id="Q9HD20"/>
    </source>
</evidence>
<evidence type="ECO:0000250" key="4">
    <source>
        <dbReference type="UniProtKB" id="Q9Y2G3"/>
    </source>
</evidence>
<evidence type="ECO:0000250" key="5">
    <source>
        <dbReference type="UniProtKB" id="Q9Y2Q0"/>
    </source>
</evidence>
<evidence type="ECO:0000255" key="6"/>
<evidence type="ECO:0000269" key="7">
    <source>
    </source>
</evidence>
<evidence type="ECO:0000269" key="8">
    <source>
    </source>
</evidence>
<evidence type="ECO:0000303" key="9">
    <source>
    </source>
</evidence>
<evidence type="ECO:0000305" key="10"/>
<dbReference type="EC" id="7.6.2.1" evidence="4"/>
<dbReference type="EMBL" id="AF236061">
    <property type="protein sequence ID" value="AAF68024.1"/>
    <property type="molecule type" value="mRNA"/>
</dbReference>
<dbReference type="EMBL" id="AY069938">
    <property type="protein sequence ID" value="AAL57758.1"/>
    <property type="molecule type" value="mRNA"/>
</dbReference>
<dbReference type="SMR" id="Q9N0Z4"/>
<dbReference type="FunCoup" id="Q9N0Z4">
    <property type="interactions" value="534"/>
</dbReference>
<dbReference type="STRING" id="9986.ENSOCUP00000035781"/>
<dbReference type="PaxDb" id="9986-ENSOCUP00000024785"/>
<dbReference type="eggNOG" id="KOG0206">
    <property type="taxonomic scope" value="Eukaryota"/>
</dbReference>
<dbReference type="InParanoid" id="Q9N0Z4"/>
<dbReference type="Proteomes" id="UP000001811">
    <property type="component" value="Unplaced"/>
</dbReference>
<dbReference type="GO" id="GO:0005769">
    <property type="term" value="C:early endosome"/>
    <property type="evidence" value="ECO:0007669"/>
    <property type="project" value="UniProtKB-SubCell"/>
</dbReference>
<dbReference type="GO" id="GO:0005783">
    <property type="term" value="C:endoplasmic reticulum"/>
    <property type="evidence" value="ECO:0007669"/>
    <property type="project" value="UniProtKB-SubCell"/>
</dbReference>
<dbReference type="GO" id="GO:0005794">
    <property type="term" value="C:Golgi apparatus"/>
    <property type="evidence" value="ECO:0007669"/>
    <property type="project" value="UniProtKB-SubCell"/>
</dbReference>
<dbReference type="GO" id="GO:0005637">
    <property type="term" value="C:nuclear inner membrane"/>
    <property type="evidence" value="ECO:0007669"/>
    <property type="project" value="UniProtKB-SubCell"/>
</dbReference>
<dbReference type="GO" id="GO:0005886">
    <property type="term" value="C:plasma membrane"/>
    <property type="evidence" value="ECO:0007669"/>
    <property type="project" value="TreeGrafter"/>
</dbReference>
<dbReference type="GO" id="GO:0055038">
    <property type="term" value="C:recycling endosome membrane"/>
    <property type="evidence" value="ECO:0007669"/>
    <property type="project" value="UniProtKB-SubCell"/>
</dbReference>
<dbReference type="GO" id="GO:0005524">
    <property type="term" value="F:ATP binding"/>
    <property type="evidence" value="ECO:0007669"/>
    <property type="project" value="UniProtKB-KW"/>
</dbReference>
<dbReference type="GO" id="GO:0016887">
    <property type="term" value="F:ATP hydrolysis activity"/>
    <property type="evidence" value="ECO:0007669"/>
    <property type="project" value="InterPro"/>
</dbReference>
<dbReference type="GO" id="GO:0000287">
    <property type="term" value="F:magnesium ion binding"/>
    <property type="evidence" value="ECO:0007669"/>
    <property type="project" value="InterPro"/>
</dbReference>
<dbReference type="GO" id="GO:0090556">
    <property type="term" value="F:phosphatidylserine floppase activity"/>
    <property type="evidence" value="ECO:0007669"/>
    <property type="project" value="RHEA"/>
</dbReference>
<dbReference type="GO" id="GO:0045332">
    <property type="term" value="P:phospholipid translocation"/>
    <property type="evidence" value="ECO:0007669"/>
    <property type="project" value="TreeGrafter"/>
</dbReference>
<dbReference type="CDD" id="cd02073">
    <property type="entry name" value="P-type_ATPase_APLT_Dnf-like"/>
    <property type="match status" value="1"/>
</dbReference>
<dbReference type="FunFam" id="2.70.150.10:FF:000013">
    <property type="entry name" value="Phospholipid-transporting ATPase"/>
    <property type="match status" value="1"/>
</dbReference>
<dbReference type="FunFam" id="3.40.1110.10:FF:000019">
    <property type="entry name" value="Phospholipid-transporting ATPase"/>
    <property type="match status" value="1"/>
</dbReference>
<dbReference type="FunFam" id="3.40.50.1000:FF:000034">
    <property type="entry name" value="Phospholipid-transporting ATPase"/>
    <property type="match status" value="1"/>
</dbReference>
<dbReference type="Gene3D" id="3.40.1110.10">
    <property type="entry name" value="Calcium-transporting ATPase, cytoplasmic domain N"/>
    <property type="match status" value="1"/>
</dbReference>
<dbReference type="Gene3D" id="2.70.150.10">
    <property type="entry name" value="Calcium-transporting ATPase, cytoplasmic transduction domain A"/>
    <property type="match status" value="1"/>
</dbReference>
<dbReference type="Gene3D" id="3.40.50.1000">
    <property type="entry name" value="HAD superfamily/HAD-like"/>
    <property type="match status" value="1"/>
</dbReference>
<dbReference type="InterPro" id="IPR023299">
    <property type="entry name" value="ATPase_P-typ_cyto_dom_N"/>
</dbReference>
<dbReference type="InterPro" id="IPR018303">
    <property type="entry name" value="ATPase_P-typ_P_site"/>
</dbReference>
<dbReference type="InterPro" id="IPR023298">
    <property type="entry name" value="ATPase_P-typ_TM_dom_sf"/>
</dbReference>
<dbReference type="InterPro" id="IPR008250">
    <property type="entry name" value="ATPase_P-typ_transduc_dom_A_sf"/>
</dbReference>
<dbReference type="InterPro" id="IPR036412">
    <property type="entry name" value="HAD-like_sf"/>
</dbReference>
<dbReference type="InterPro" id="IPR023214">
    <property type="entry name" value="HAD_sf"/>
</dbReference>
<dbReference type="InterPro" id="IPR006539">
    <property type="entry name" value="P-type_ATPase_IV"/>
</dbReference>
<dbReference type="InterPro" id="IPR032631">
    <property type="entry name" value="P-type_ATPase_N"/>
</dbReference>
<dbReference type="InterPro" id="IPR001757">
    <property type="entry name" value="P_typ_ATPase"/>
</dbReference>
<dbReference type="InterPro" id="IPR032630">
    <property type="entry name" value="P_typ_ATPase_c"/>
</dbReference>
<dbReference type="InterPro" id="IPR044492">
    <property type="entry name" value="P_typ_ATPase_HD_dom"/>
</dbReference>
<dbReference type="NCBIfam" id="TIGR01652">
    <property type="entry name" value="ATPase-Plipid"/>
    <property type="match status" value="1"/>
</dbReference>
<dbReference type="NCBIfam" id="TIGR01494">
    <property type="entry name" value="ATPase_P-type"/>
    <property type="match status" value="3"/>
</dbReference>
<dbReference type="PANTHER" id="PTHR24092:SF57">
    <property type="entry name" value="PHOSPHOLIPID-TRANSPORTING ATPASE IF"/>
    <property type="match status" value="1"/>
</dbReference>
<dbReference type="PANTHER" id="PTHR24092">
    <property type="entry name" value="PROBABLE PHOSPHOLIPID-TRANSPORTING ATPASE"/>
    <property type="match status" value="1"/>
</dbReference>
<dbReference type="Pfam" id="PF13246">
    <property type="entry name" value="Cation_ATPase"/>
    <property type="match status" value="1"/>
</dbReference>
<dbReference type="Pfam" id="PF00122">
    <property type="entry name" value="E1-E2_ATPase"/>
    <property type="match status" value="1"/>
</dbReference>
<dbReference type="Pfam" id="PF00702">
    <property type="entry name" value="Hydrolase"/>
    <property type="match status" value="1"/>
</dbReference>
<dbReference type="Pfam" id="PF16212">
    <property type="entry name" value="PhoLip_ATPase_C"/>
    <property type="match status" value="1"/>
</dbReference>
<dbReference type="Pfam" id="PF16209">
    <property type="entry name" value="PhoLip_ATPase_N"/>
    <property type="match status" value="1"/>
</dbReference>
<dbReference type="PRINTS" id="PR00119">
    <property type="entry name" value="CATATPASE"/>
</dbReference>
<dbReference type="SFLD" id="SFLDS00003">
    <property type="entry name" value="Haloacid_Dehalogenase"/>
    <property type="match status" value="1"/>
</dbReference>
<dbReference type="SFLD" id="SFLDF00027">
    <property type="entry name" value="p-type_atpase"/>
    <property type="match status" value="1"/>
</dbReference>
<dbReference type="SUPFAM" id="SSF81653">
    <property type="entry name" value="Calcium ATPase, transduction domain A"/>
    <property type="match status" value="1"/>
</dbReference>
<dbReference type="SUPFAM" id="SSF81665">
    <property type="entry name" value="Calcium ATPase, transmembrane domain M"/>
    <property type="match status" value="1"/>
</dbReference>
<dbReference type="SUPFAM" id="SSF56784">
    <property type="entry name" value="HAD-like"/>
    <property type="match status" value="1"/>
</dbReference>
<dbReference type="SUPFAM" id="SSF81660">
    <property type="entry name" value="Metal cation-transporting ATPase, ATP-binding domain N"/>
    <property type="match status" value="1"/>
</dbReference>
<dbReference type="PROSITE" id="PS00154">
    <property type="entry name" value="ATPASE_E1_E2"/>
    <property type="match status" value="1"/>
</dbReference>
<sequence>LGFDPPHQSDTRTIYIANRFPQNGLYTPQKFIDNRIISSKYTVWNFVPKNLFEQFRRVANFYFLIIFLVQLMIDTPTSPITSGLPLFFVITVTAIKQGYEDWLRHNSDNEVNGAPVYVVRSGGLVKTRSKNIRVGDIVRIAKDEIFPADLVLLSSDRLDGSCHVTTASLDGETNLKTHVAVPETAVLQTVANLDTLVAVIECQQPEADLYRFMGRMIITQQMEEIVRPLGPESLLLRGARLKNTKEIFGVAVYTGMETKMALNYKSKSQKRSAVEKSMNTFLIIYLIILISEAIISTILKYTWQAEEKWDEPWYNQKTEHQRNSSKILRFISDFLAFLVLYNFIIPISLYVTVEMQKFLGSFFIGWDLDLYHEESDQKAQVNTSDLNEELGQVEYVFTDKTGTLTENEMQFRECSIHGMKYQEINGRLVPEGPTPDSSEGNLSYLSSLSHVNSLSHLTSSSSFRTSPENDTELIKEHDLFFKAVSLCHTVQISSVQTDGIGDGPWQSSLAPSQLEYYASSPDEKALVEAAARIGIVFVGNTEETMEVKILGKLERYKLLHVLEFDSDRRRMSVIVQAPSGERFLFAKGAESSILPKCIGGEIEKTRIHVDEFALKGLRTLCVAYRQFTSKEYEVIDRRLFEARTALQQREEKLADVFHYIEKDLILLGATAVEDRLQDKVRETIEALRMAGIKVWVLTGDKHETAVSVSLSCGHFHRTMNILELTNQKSDSECAEQLRQLARRITEDHVIQHGLVVDGTSLSLALREHEKLFMEVCRNCSAVLCCRMAPLQKAKVIRLIKISPEKPITIGCWDGANDVSMIQEAHVGIGIMGKERRQAARNSDYAIARFKFLSKLLFVHGHFYYIRIATLVQYFFYKNVCFITPQFLYQFYCLFSQQTLYDSVYLTLYNICFTSLPILIYSLLEQHIDPHILQNKPTLYRDISKNRLLSIKTFLYWTILGFSRSFIFLFGSYFLIGKDASLLGNGQMFGNWTFGTLVFTVMVITVTVKMALETHFWTWINHLVTWGSIIFYFVFSLFYGGILWPFLGSQNMYFVFIQLVSSGSAWFAIILMVVTCLFLDVMKKVFDRQLHPTSTEKAQLTETNSSIKCVDSLCCFPEGETTCTSVRRMLERVIGRCSPTHISRSWSASDPFYTNDRSILTLSTMDSSTC</sequence>